<protein>
    <recommendedName>
        <fullName evidence="1">Pantothenate synthetase</fullName>
        <shortName evidence="1">PS</shortName>
        <ecNumber evidence="1">6.3.2.1</ecNumber>
    </recommendedName>
    <alternativeName>
        <fullName evidence="1">Pantoate--beta-alanine ligase</fullName>
    </alternativeName>
    <alternativeName>
        <fullName evidence="1">Pantoate-activating enzyme</fullName>
    </alternativeName>
</protein>
<organism>
    <name type="scientific">Pseudomonas entomophila (strain L48)</name>
    <dbReference type="NCBI Taxonomy" id="384676"/>
    <lineage>
        <taxon>Bacteria</taxon>
        <taxon>Pseudomonadati</taxon>
        <taxon>Pseudomonadota</taxon>
        <taxon>Gammaproteobacteria</taxon>
        <taxon>Pseudomonadales</taxon>
        <taxon>Pseudomonadaceae</taxon>
        <taxon>Pseudomonas</taxon>
    </lineage>
</organism>
<keyword id="KW-0067">ATP-binding</keyword>
<keyword id="KW-0963">Cytoplasm</keyword>
<keyword id="KW-0436">Ligase</keyword>
<keyword id="KW-0547">Nucleotide-binding</keyword>
<keyword id="KW-0566">Pantothenate biosynthesis</keyword>
<accession>Q1I4P1</accession>
<sequence>MNTVKTVRELRAAVARARGEGKRIAFVPTMGNLHSGHAALVTKAAQRADFVVASIFVNPLQFGAGEDLDKYPRTLAADQEKLLQAGCHLLFAPTVEEMYPDGMAVQTRVSVPQLSEGLCGASRPGHFEGVATVVSKLFNMVQPDLAVFGEKDFQQLAVIRAMVRDLNMPIQIIGEPTVRAEDGLALSSRNGYLSPEQRAAAPALYRTLNGMAEAIRRGQRDFSALVADGQAQLDAAGFRKDYLEVRHALTLRPAQVDDRDLVVIAAAYMGSTRLIDNLYLHLEEQTA</sequence>
<dbReference type="EC" id="6.3.2.1" evidence="1"/>
<dbReference type="EMBL" id="CT573326">
    <property type="protein sequence ID" value="CAK17395.1"/>
    <property type="molecule type" value="Genomic_DNA"/>
</dbReference>
<dbReference type="RefSeq" id="WP_011535757.1">
    <property type="nucleotide sequence ID" value="NC_008027.1"/>
</dbReference>
<dbReference type="SMR" id="Q1I4P1"/>
<dbReference type="STRING" id="384676.PSEEN4736"/>
<dbReference type="GeneID" id="32807701"/>
<dbReference type="KEGG" id="pen:PSEEN4736"/>
<dbReference type="eggNOG" id="COG0414">
    <property type="taxonomic scope" value="Bacteria"/>
</dbReference>
<dbReference type="HOGENOM" id="CLU_047148_0_0_6"/>
<dbReference type="OrthoDB" id="9773087at2"/>
<dbReference type="UniPathway" id="UPA00028">
    <property type="reaction ID" value="UER00005"/>
</dbReference>
<dbReference type="Proteomes" id="UP000000658">
    <property type="component" value="Chromosome"/>
</dbReference>
<dbReference type="GO" id="GO:0005829">
    <property type="term" value="C:cytosol"/>
    <property type="evidence" value="ECO:0007669"/>
    <property type="project" value="TreeGrafter"/>
</dbReference>
<dbReference type="GO" id="GO:0005524">
    <property type="term" value="F:ATP binding"/>
    <property type="evidence" value="ECO:0007669"/>
    <property type="project" value="UniProtKB-KW"/>
</dbReference>
<dbReference type="GO" id="GO:0004592">
    <property type="term" value="F:pantoate-beta-alanine ligase activity"/>
    <property type="evidence" value="ECO:0007669"/>
    <property type="project" value="UniProtKB-UniRule"/>
</dbReference>
<dbReference type="GO" id="GO:0015940">
    <property type="term" value="P:pantothenate biosynthetic process"/>
    <property type="evidence" value="ECO:0007669"/>
    <property type="project" value="UniProtKB-UniRule"/>
</dbReference>
<dbReference type="CDD" id="cd00560">
    <property type="entry name" value="PanC"/>
    <property type="match status" value="1"/>
</dbReference>
<dbReference type="FunFam" id="3.30.1300.10:FF:000001">
    <property type="entry name" value="Pantothenate synthetase"/>
    <property type="match status" value="1"/>
</dbReference>
<dbReference type="FunFam" id="3.40.50.620:FF:000013">
    <property type="entry name" value="Pantothenate synthetase"/>
    <property type="match status" value="1"/>
</dbReference>
<dbReference type="Gene3D" id="3.40.50.620">
    <property type="entry name" value="HUPs"/>
    <property type="match status" value="1"/>
</dbReference>
<dbReference type="Gene3D" id="3.30.1300.10">
    <property type="entry name" value="Pantoate-beta-alanine ligase, C-terminal domain"/>
    <property type="match status" value="1"/>
</dbReference>
<dbReference type="HAMAP" id="MF_00158">
    <property type="entry name" value="PanC"/>
    <property type="match status" value="1"/>
</dbReference>
<dbReference type="InterPro" id="IPR003721">
    <property type="entry name" value="Pantoate_ligase"/>
</dbReference>
<dbReference type="InterPro" id="IPR042176">
    <property type="entry name" value="Pantoate_ligase_C"/>
</dbReference>
<dbReference type="InterPro" id="IPR014729">
    <property type="entry name" value="Rossmann-like_a/b/a_fold"/>
</dbReference>
<dbReference type="NCBIfam" id="TIGR00018">
    <property type="entry name" value="panC"/>
    <property type="match status" value="1"/>
</dbReference>
<dbReference type="PANTHER" id="PTHR21299">
    <property type="entry name" value="CYTIDYLATE KINASE/PANTOATE-BETA-ALANINE LIGASE"/>
    <property type="match status" value="1"/>
</dbReference>
<dbReference type="PANTHER" id="PTHR21299:SF1">
    <property type="entry name" value="PANTOATE--BETA-ALANINE LIGASE"/>
    <property type="match status" value="1"/>
</dbReference>
<dbReference type="Pfam" id="PF02569">
    <property type="entry name" value="Pantoate_ligase"/>
    <property type="match status" value="1"/>
</dbReference>
<dbReference type="SUPFAM" id="SSF52374">
    <property type="entry name" value="Nucleotidylyl transferase"/>
    <property type="match status" value="1"/>
</dbReference>
<feature type="chain" id="PRO_0000305515" description="Pantothenate synthetase">
    <location>
        <begin position="1"/>
        <end position="287"/>
    </location>
</feature>
<feature type="active site" description="Proton donor" evidence="1">
    <location>
        <position position="37"/>
    </location>
</feature>
<feature type="binding site" evidence="1">
    <location>
        <begin position="30"/>
        <end position="37"/>
    </location>
    <ligand>
        <name>ATP</name>
        <dbReference type="ChEBI" id="CHEBI:30616"/>
    </ligand>
</feature>
<feature type="binding site" evidence="1">
    <location>
        <position position="61"/>
    </location>
    <ligand>
        <name>(R)-pantoate</name>
        <dbReference type="ChEBI" id="CHEBI:15980"/>
    </ligand>
</feature>
<feature type="binding site" evidence="1">
    <location>
        <position position="61"/>
    </location>
    <ligand>
        <name>beta-alanine</name>
        <dbReference type="ChEBI" id="CHEBI:57966"/>
    </ligand>
</feature>
<feature type="binding site" evidence="1">
    <location>
        <begin position="149"/>
        <end position="152"/>
    </location>
    <ligand>
        <name>ATP</name>
        <dbReference type="ChEBI" id="CHEBI:30616"/>
    </ligand>
</feature>
<feature type="binding site" evidence="1">
    <location>
        <position position="155"/>
    </location>
    <ligand>
        <name>(R)-pantoate</name>
        <dbReference type="ChEBI" id="CHEBI:15980"/>
    </ligand>
</feature>
<feature type="binding site" evidence="1">
    <location>
        <position position="178"/>
    </location>
    <ligand>
        <name>ATP</name>
        <dbReference type="ChEBI" id="CHEBI:30616"/>
    </ligand>
</feature>
<feature type="binding site" evidence="1">
    <location>
        <begin position="186"/>
        <end position="189"/>
    </location>
    <ligand>
        <name>ATP</name>
        <dbReference type="ChEBI" id="CHEBI:30616"/>
    </ligand>
</feature>
<name>PANC_PSEE4</name>
<evidence type="ECO:0000255" key="1">
    <source>
        <dbReference type="HAMAP-Rule" id="MF_00158"/>
    </source>
</evidence>
<proteinExistence type="inferred from homology"/>
<gene>
    <name evidence="1" type="primary">panC</name>
    <name type="ordered locus">PSEEN4736</name>
</gene>
<comment type="function">
    <text evidence="1">Catalyzes the condensation of pantoate with beta-alanine in an ATP-dependent reaction via a pantoyl-adenylate intermediate.</text>
</comment>
<comment type="catalytic activity">
    <reaction evidence="1">
        <text>(R)-pantoate + beta-alanine + ATP = (R)-pantothenate + AMP + diphosphate + H(+)</text>
        <dbReference type="Rhea" id="RHEA:10912"/>
        <dbReference type="ChEBI" id="CHEBI:15378"/>
        <dbReference type="ChEBI" id="CHEBI:15980"/>
        <dbReference type="ChEBI" id="CHEBI:29032"/>
        <dbReference type="ChEBI" id="CHEBI:30616"/>
        <dbReference type="ChEBI" id="CHEBI:33019"/>
        <dbReference type="ChEBI" id="CHEBI:57966"/>
        <dbReference type="ChEBI" id="CHEBI:456215"/>
        <dbReference type="EC" id="6.3.2.1"/>
    </reaction>
</comment>
<comment type="pathway">
    <text evidence="1">Cofactor biosynthesis; (R)-pantothenate biosynthesis; (R)-pantothenate from (R)-pantoate and beta-alanine: step 1/1.</text>
</comment>
<comment type="subunit">
    <text evidence="1">Homodimer.</text>
</comment>
<comment type="subcellular location">
    <subcellularLocation>
        <location evidence="1">Cytoplasm</location>
    </subcellularLocation>
</comment>
<comment type="miscellaneous">
    <text evidence="1">The reaction proceeds by a bi uni uni bi ping pong mechanism.</text>
</comment>
<comment type="similarity">
    <text evidence="1">Belongs to the pantothenate synthetase family.</text>
</comment>
<reference key="1">
    <citation type="journal article" date="2006" name="Nat. Biotechnol.">
        <title>Complete genome sequence of the entomopathogenic and metabolically versatile soil bacterium Pseudomonas entomophila.</title>
        <authorList>
            <person name="Vodovar N."/>
            <person name="Vallenet D."/>
            <person name="Cruveiller S."/>
            <person name="Rouy Z."/>
            <person name="Barbe V."/>
            <person name="Acosta C."/>
            <person name="Cattolico L."/>
            <person name="Jubin C."/>
            <person name="Lajus A."/>
            <person name="Segurens B."/>
            <person name="Vacherie B."/>
            <person name="Wincker P."/>
            <person name="Weissenbach J."/>
            <person name="Lemaitre B."/>
            <person name="Medigue C."/>
            <person name="Boccard F."/>
        </authorList>
    </citation>
    <scope>NUCLEOTIDE SEQUENCE [LARGE SCALE GENOMIC DNA]</scope>
    <source>
        <strain>L48</strain>
    </source>
</reference>